<sequence>MSKVAIIDFGSQFTQLLARRIRDLNIYSEIFLPNVAFDLIKGVDAFILSGGPRSVPNSDGIPKIVHDILQFNEKTSIPVLGICYGLQILSNYFESDVVSNCNKEFGKTILNIIKNSKIIENIWESGDQACVWMSHADSVYNIPRGFEVIAYSVLNNSIAMVANEQRRIYGMQFHPEVYHTPDGINLLANFLDIAGCQKDWTVTSFIDDQQDAIKKQIGNKKVIAALSGGVDSSVAAALTYKAIGDQLHCVFIDNGLLRYNEVEKVKQLFINELKIPVTIVDKSAVFLNRLKSITDPERKRKIIGETFIEIFEEEANKLEGVEFLMQGTIYPDVVESGGSGSIAKESVVIKSHHNVGGLPKTMKFKLVEPLKYLFKDEVRILGRNLGISTEILMRHPFPGPGLAVRIIGEITEEKVKMLQAADDIYINLIKKYELYDVMWQAFVVLLPVKTVGVMGDRRTYGHACVLRAVNSHDGMTAESFPFCMDEETQWKFFKCIQEASNAIINSVNGINRVAYDITSKPPATIEWE</sequence>
<feature type="chain" id="PRO_0000229427" description="GMP synthase [glutamine-hydrolyzing]">
    <location>
        <begin position="1"/>
        <end position="528"/>
    </location>
</feature>
<feature type="domain" description="Glutamine amidotransferase type-1" evidence="1">
    <location>
        <begin position="3"/>
        <end position="199"/>
    </location>
</feature>
<feature type="domain" description="GMPS ATP-PPase" evidence="1">
    <location>
        <begin position="200"/>
        <end position="394"/>
    </location>
</feature>
<feature type="active site" description="Nucleophile" evidence="1">
    <location>
        <position position="83"/>
    </location>
</feature>
<feature type="active site" evidence="1">
    <location>
        <position position="174"/>
    </location>
</feature>
<feature type="active site" evidence="1">
    <location>
        <position position="176"/>
    </location>
</feature>
<feature type="binding site" evidence="1">
    <location>
        <begin position="227"/>
        <end position="233"/>
    </location>
    <ligand>
        <name>ATP</name>
        <dbReference type="ChEBI" id="CHEBI:30616"/>
    </ligand>
</feature>
<proteinExistence type="inferred from homology"/>
<protein>
    <recommendedName>
        <fullName evidence="1">GMP synthase [glutamine-hydrolyzing]</fullName>
        <ecNumber evidence="1">6.3.5.2</ecNumber>
    </recommendedName>
    <alternativeName>
        <fullName evidence="1">GMP synthetase</fullName>
    </alternativeName>
    <alternativeName>
        <fullName evidence="1">Glutamine amidotransferase</fullName>
    </alternativeName>
</protein>
<dbReference type="EC" id="6.3.5.2" evidence="1"/>
<dbReference type="EMBL" id="CR925678">
    <property type="protein sequence ID" value="CAI26562.1"/>
    <property type="molecule type" value="Genomic_DNA"/>
</dbReference>
<dbReference type="EMBL" id="CR767821">
    <property type="protein sequence ID" value="CAH57786.1"/>
    <property type="molecule type" value="Genomic_DNA"/>
</dbReference>
<dbReference type="RefSeq" id="WP_011154758.1">
    <property type="nucleotide sequence ID" value="NC_005295.2"/>
</dbReference>
<dbReference type="SMR" id="Q5HCA2"/>
<dbReference type="GeneID" id="33058172"/>
<dbReference type="KEGG" id="eru:Erum0740"/>
<dbReference type="KEGG" id="erw:ERWE_CDS_00680"/>
<dbReference type="eggNOG" id="COG0519">
    <property type="taxonomic scope" value="Bacteria"/>
</dbReference>
<dbReference type="HOGENOM" id="CLU_014340_0_5_5"/>
<dbReference type="UniPathway" id="UPA00189">
    <property type="reaction ID" value="UER00296"/>
</dbReference>
<dbReference type="Proteomes" id="UP000001021">
    <property type="component" value="Chromosome"/>
</dbReference>
<dbReference type="GO" id="GO:0005829">
    <property type="term" value="C:cytosol"/>
    <property type="evidence" value="ECO:0007669"/>
    <property type="project" value="TreeGrafter"/>
</dbReference>
<dbReference type="GO" id="GO:0005524">
    <property type="term" value="F:ATP binding"/>
    <property type="evidence" value="ECO:0007669"/>
    <property type="project" value="UniProtKB-UniRule"/>
</dbReference>
<dbReference type="GO" id="GO:0003921">
    <property type="term" value="F:GMP synthase activity"/>
    <property type="evidence" value="ECO:0007669"/>
    <property type="project" value="InterPro"/>
</dbReference>
<dbReference type="CDD" id="cd01742">
    <property type="entry name" value="GATase1_GMP_Synthase"/>
    <property type="match status" value="1"/>
</dbReference>
<dbReference type="CDD" id="cd01997">
    <property type="entry name" value="GMP_synthase_C"/>
    <property type="match status" value="1"/>
</dbReference>
<dbReference type="FunFam" id="3.30.300.10:FF:000002">
    <property type="entry name" value="GMP synthase [glutamine-hydrolyzing]"/>
    <property type="match status" value="1"/>
</dbReference>
<dbReference type="FunFam" id="3.40.50.620:FF:000001">
    <property type="entry name" value="GMP synthase [glutamine-hydrolyzing]"/>
    <property type="match status" value="1"/>
</dbReference>
<dbReference type="Gene3D" id="3.30.300.10">
    <property type="match status" value="1"/>
</dbReference>
<dbReference type="Gene3D" id="3.40.50.880">
    <property type="match status" value="1"/>
</dbReference>
<dbReference type="Gene3D" id="3.40.50.620">
    <property type="entry name" value="HUPs"/>
    <property type="match status" value="1"/>
</dbReference>
<dbReference type="HAMAP" id="MF_00344">
    <property type="entry name" value="GMP_synthase"/>
    <property type="match status" value="1"/>
</dbReference>
<dbReference type="InterPro" id="IPR029062">
    <property type="entry name" value="Class_I_gatase-like"/>
</dbReference>
<dbReference type="InterPro" id="IPR017926">
    <property type="entry name" value="GATASE"/>
</dbReference>
<dbReference type="InterPro" id="IPR001674">
    <property type="entry name" value="GMP_synth_C"/>
</dbReference>
<dbReference type="InterPro" id="IPR004739">
    <property type="entry name" value="GMP_synth_GATase"/>
</dbReference>
<dbReference type="InterPro" id="IPR022955">
    <property type="entry name" value="GMP_synthase"/>
</dbReference>
<dbReference type="InterPro" id="IPR025777">
    <property type="entry name" value="GMPS_ATP_PPase_dom"/>
</dbReference>
<dbReference type="InterPro" id="IPR022310">
    <property type="entry name" value="NAD/GMP_synthase"/>
</dbReference>
<dbReference type="InterPro" id="IPR014729">
    <property type="entry name" value="Rossmann-like_a/b/a_fold"/>
</dbReference>
<dbReference type="NCBIfam" id="TIGR00884">
    <property type="entry name" value="guaA_Cterm"/>
    <property type="match status" value="1"/>
</dbReference>
<dbReference type="NCBIfam" id="TIGR00888">
    <property type="entry name" value="guaA_Nterm"/>
    <property type="match status" value="1"/>
</dbReference>
<dbReference type="NCBIfam" id="NF000848">
    <property type="entry name" value="PRK00074.1"/>
    <property type="match status" value="1"/>
</dbReference>
<dbReference type="PANTHER" id="PTHR11922:SF2">
    <property type="entry name" value="GMP SYNTHASE [GLUTAMINE-HYDROLYZING]"/>
    <property type="match status" value="1"/>
</dbReference>
<dbReference type="PANTHER" id="PTHR11922">
    <property type="entry name" value="GMP SYNTHASE-RELATED"/>
    <property type="match status" value="1"/>
</dbReference>
<dbReference type="Pfam" id="PF00117">
    <property type="entry name" value="GATase"/>
    <property type="match status" value="1"/>
</dbReference>
<dbReference type="Pfam" id="PF00958">
    <property type="entry name" value="GMP_synt_C"/>
    <property type="match status" value="1"/>
</dbReference>
<dbReference type="Pfam" id="PF02540">
    <property type="entry name" value="NAD_synthase"/>
    <property type="match status" value="1"/>
</dbReference>
<dbReference type="PRINTS" id="PR00097">
    <property type="entry name" value="ANTSNTHASEII"/>
</dbReference>
<dbReference type="PRINTS" id="PR00096">
    <property type="entry name" value="GATASE"/>
</dbReference>
<dbReference type="SUPFAM" id="SSF52402">
    <property type="entry name" value="Adenine nucleotide alpha hydrolases-like"/>
    <property type="match status" value="1"/>
</dbReference>
<dbReference type="SUPFAM" id="SSF52317">
    <property type="entry name" value="Class I glutamine amidotransferase-like"/>
    <property type="match status" value="1"/>
</dbReference>
<dbReference type="SUPFAM" id="SSF54810">
    <property type="entry name" value="GMP synthetase C-terminal dimerisation domain"/>
    <property type="match status" value="1"/>
</dbReference>
<dbReference type="PROSITE" id="PS51273">
    <property type="entry name" value="GATASE_TYPE_1"/>
    <property type="match status" value="1"/>
</dbReference>
<dbReference type="PROSITE" id="PS51553">
    <property type="entry name" value="GMPS_ATP_PPASE"/>
    <property type="match status" value="1"/>
</dbReference>
<keyword id="KW-0067">ATP-binding</keyword>
<keyword id="KW-0315">Glutamine amidotransferase</keyword>
<keyword id="KW-0332">GMP biosynthesis</keyword>
<keyword id="KW-0436">Ligase</keyword>
<keyword id="KW-0547">Nucleotide-binding</keyword>
<keyword id="KW-0658">Purine biosynthesis</keyword>
<accession>Q5HCA2</accession>
<accession>Q5FCJ9</accession>
<reference key="1">
    <citation type="journal article" date="2005" name="Proc. Natl. Acad. Sci. U.S.A.">
        <title>The genome of the heartwater agent Ehrlichia ruminantium contains multiple tandem repeats of actively variable copy number.</title>
        <authorList>
            <person name="Collins N.E."/>
            <person name="Liebenberg J."/>
            <person name="de Villiers E.P."/>
            <person name="Brayton K.A."/>
            <person name="Louw E."/>
            <person name="Pretorius A."/>
            <person name="Faber F.E."/>
            <person name="van Heerden H."/>
            <person name="Josemans A."/>
            <person name="van Kleef M."/>
            <person name="Steyn H.C."/>
            <person name="van Strijp M.F."/>
            <person name="Zweygarth E."/>
            <person name="Jongejan F."/>
            <person name="Maillard J.C."/>
            <person name="Berthier D."/>
            <person name="Botha M."/>
            <person name="Joubert F."/>
            <person name="Corton C.H."/>
            <person name="Thomson N.R."/>
            <person name="Allsopp M.T."/>
            <person name="Allsopp B.A."/>
        </authorList>
    </citation>
    <scope>NUCLEOTIDE SEQUENCE [LARGE SCALE GENOMIC DNA]</scope>
    <source>
        <strain>Welgevonden</strain>
    </source>
</reference>
<reference key="2">
    <citation type="journal article" date="2006" name="J. Bacteriol.">
        <title>Comparative genomic analysis of three strains of Ehrlichia ruminantium reveals an active process of genome size plasticity.</title>
        <authorList>
            <person name="Frutos R."/>
            <person name="Viari A."/>
            <person name="Ferraz C."/>
            <person name="Morgat A."/>
            <person name="Eychenie S."/>
            <person name="Kandassamy Y."/>
            <person name="Chantal I."/>
            <person name="Bensaid A."/>
            <person name="Coissac E."/>
            <person name="Vachiery N."/>
            <person name="Demaille J."/>
            <person name="Martinez D."/>
        </authorList>
    </citation>
    <scope>NUCLEOTIDE SEQUENCE [LARGE SCALE GENOMIC DNA]</scope>
    <source>
        <strain>Welgevonden</strain>
    </source>
</reference>
<evidence type="ECO:0000255" key="1">
    <source>
        <dbReference type="HAMAP-Rule" id="MF_00344"/>
    </source>
</evidence>
<name>GUAA_EHRRW</name>
<organism>
    <name type="scientific">Ehrlichia ruminantium (strain Welgevonden)</name>
    <dbReference type="NCBI Taxonomy" id="254945"/>
    <lineage>
        <taxon>Bacteria</taxon>
        <taxon>Pseudomonadati</taxon>
        <taxon>Pseudomonadota</taxon>
        <taxon>Alphaproteobacteria</taxon>
        <taxon>Rickettsiales</taxon>
        <taxon>Anaplasmataceae</taxon>
        <taxon>Ehrlichia</taxon>
    </lineage>
</organism>
<comment type="function">
    <text evidence="1">Catalyzes the synthesis of GMP from XMP.</text>
</comment>
<comment type="catalytic activity">
    <reaction evidence="1">
        <text>XMP + L-glutamine + ATP + H2O = GMP + L-glutamate + AMP + diphosphate + 2 H(+)</text>
        <dbReference type="Rhea" id="RHEA:11680"/>
        <dbReference type="ChEBI" id="CHEBI:15377"/>
        <dbReference type="ChEBI" id="CHEBI:15378"/>
        <dbReference type="ChEBI" id="CHEBI:29985"/>
        <dbReference type="ChEBI" id="CHEBI:30616"/>
        <dbReference type="ChEBI" id="CHEBI:33019"/>
        <dbReference type="ChEBI" id="CHEBI:57464"/>
        <dbReference type="ChEBI" id="CHEBI:58115"/>
        <dbReference type="ChEBI" id="CHEBI:58359"/>
        <dbReference type="ChEBI" id="CHEBI:456215"/>
        <dbReference type="EC" id="6.3.5.2"/>
    </reaction>
</comment>
<comment type="pathway">
    <text evidence="1">Purine metabolism; GMP biosynthesis; GMP from XMP (L-Gln route): step 1/1.</text>
</comment>
<comment type="subunit">
    <text evidence="1">Homodimer.</text>
</comment>
<gene>
    <name evidence="1" type="primary">guaA</name>
    <name type="ordered locus">Erum0740</name>
    <name type="ordered locus">ERWE_CDS_00680</name>
</gene>